<dbReference type="EMBL" id="CP000970">
    <property type="protein sequence ID" value="ACB17923.1"/>
    <property type="molecule type" value="Genomic_DNA"/>
</dbReference>
<dbReference type="RefSeq" id="WP_001138117.1">
    <property type="nucleotide sequence ID" value="NC_010498.1"/>
</dbReference>
<dbReference type="SMR" id="B1LHD0"/>
<dbReference type="GeneID" id="98390438"/>
<dbReference type="KEGG" id="ecm:EcSMS35_3611"/>
<dbReference type="HOGENOM" id="CLU_144911_0_1_6"/>
<dbReference type="Proteomes" id="UP000007011">
    <property type="component" value="Chromosome"/>
</dbReference>
<dbReference type="GO" id="GO:0005737">
    <property type="term" value="C:cytoplasm"/>
    <property type="evidence" value="ECO:0007669"/>
    <property type="project" value="UniProtKB-ARBA"/>
</dbReference>
<dbReference type="GO" id="GO:0015935">
    <property type="term" value="C:small ribosomal subunit"/>
    <property type="evidence" value="ECO:0007669"/>
    <property type="project" value="InterPro"/>
</dbReference>
<dbReference type="GO" id="GO:0019843">
    <property type="term" value="F:rRNA binding"/>
    <property type="evidence" value="ECO:0007669"/>
    <property type="project" value="UniProtKB-UniRule"/>
</dbReference>
<dbReference type="GO" id="GO:0003735">
    <property type="term" value="F:structural constituent of ribosome"/>
    <property type="evidence" value="ECO:0007669"/>
    <property type="project" value="InterPro"/>
</dbReference>
<dbReference type="GO" id="GO:0000028">
    <property type="term" value="P:ribosomal small subunit assembly"/>
    <property type="evidence" value="ECO:0007669"/>
    <property type="project" value="TreeGrafter"/>
</dbReference>
<dbReference type="GO" id="GO:0006412">
    <property type="term" value="P:translation"/>
    <property type="evidence" value="ECO:0007669"/>
    <property type="project" value="UniProtKB-UniRule"/>
</dbReference>
<dbReference type="FunFam" id="3.30.860.10:FF:000001">
    <property type="entry name" value="30S ribosomal protein S19"/>
    <property type="match status" value="1"/>
</dbReference>
<dbReference type="Gene3D" id="3.30.860.10">
    <property type="entry name" value="30s Ribosomal Protein S19, Chain A"/>
    <property type="match status" value="1"/>
</dbReference>
<dbReference type="HAMAP" id="MF_00531">
    <property type="entry name" value="Ribosomal_uS19"/>
    <property type="match status" value="1"/>
</dbReference>
<dbReference type="InterPro" id="IPR002222">
    <property type="entry name" value="Ribosomal_uS19"/>
</dbReference>
<dbReference type="InterPro" id="IPR005732">
    <property type="entry name" value="Ribosomal_uS19_bac-type"/>
</dbReference>
<dbReference type="InterPro" id="IPR020934">
    <property type="entry name" value="Ribosomal_uS19_CS"/>
</dbReference>
<dbReference type="InterPro" id="IPR023575">
    <property type="entry name" value="Ribosomal_uS19_SF"/>
</dbReference>
<dbReference type="NCBIfam" id="TIGR01050">
    <property type="entry name" value="rpsS_bact"/>
    <property type="match status" value="1"/>
</dbReference>
<dbReference type="PANTHER" id="PTHR11880">
    <property type="entry name" value="RIBOSOMAL PROTEIN S19P FAMILY MEMBER"/>
    <property type="match status" value="1"/>
</dbReference>
<dbReference type="PANTHER" id="PTHR11880:SF8">
    <property type="entry name" value="SMALL RIBOSOMAL SUBUNIT PROTEIN US19M"/>
    <property type="match status" value="1"/>
</dbReference>
<dbReference type="Pfam" id="PF00203">
    <property type="entry name" value="Ribosomal_S19"/>
    <property type="match status" value="1"/>
</dbReference>
<dbReference type="PIRSF" id="PIRSF002144">
    <property type="entry name" value="Ribosomal_S19"/>
    <property type="match status" value="1"/>
</dbReference>
<dbReference type="PRINTS" id="PR00975">
    <property type="entry name" value="RIBOSOMALS19"/>
</dbReference>
<dbReference type="SUPFAM" id="SSF54570">
    <property type="entry name" value="Ribosomal protein S19"/>
    <property type="match status" value="1"/>
</dbReference>
<dbReference type="PROSITE" id="PS00323">
    <property type="entry name" value="RIBOSOMAL_S19"/>
    <property type="match status" value="1"/>
</dbReference>
<comment type="function">
    <text evidence="1">Protein S19 forms a complex with S13 that binds strongly to the 16S ribosomal RNA.</text>
</comment>
<comment type="similarity">
    <text evidence="1">Belongs to the universal ribosomal protein uS19 family.</text>
</comment>
<name>RS19_ECOSM</name>
<accession>B1LHD0</accession>
<gene>
    <name evidence="1" type="primary">rpsS</name>
    <name type="ordered locus">EcSMS35_3611</name>
</gene>
<reference key="1">
    <citation type="journal article" date="2008" name="J. Bacteriol.">
        <title>Insights into the environmental resistance gene pool from the genome sequence of the multidrug-resistant environmental isolate Escherichia coli SMS-3-5.</title>
        <authorList>
            <person name="Fricke W.F."/>
            <person name="Wright M.S."/>
            <person name="Lindell A.H."/>
            <person name="Harkins D.M."/>
            <person name="Baker-Austin C."/>
            <person name="Ravel J."/>
            <person name="Stepanauskas R."/>
        </authorList>
    </citation>
    <scope>NUCLEOTIDE SEQUENCE [LARGE SCALE GENOMIC DNA]</scope>
    <source>
        <strain>SMS-3-5 / SECEC</strain>
    </source>
</reference>
<protein>
    <recommendedName>
        <fullName evidence="1">Small ribosomal subunit protein uS19</fullName>
    </recommendedName>
    <alternativeName>
        <fullName evidence="2">30S ribosomal protein S19</fullName>
    </alternativeName>
</protein>
<proteinExistence type="inferred from homology"/>
<organism>
    <name type="scientific">Escherichia coli (strain SMS-3-5 / SECEC)</name>
    <dbReference type="NCBI Taxonomy" id="439855"/>
    <lineage>
        <taxon>Bacteria</taxon>
        <taxon>Pseudomonadati</taxon>
        <taxon>Pseudomonadota</taxon>
        <taxon>Gammaproteobacteria</taxon>
        <taxon>Enterobacterales</taxon>
        <taxon>Enterobacteriaceae</taxon>
        <taxon>Escherichia</taxon>
    </lineage>
</organism>
<feature type="chain" id="PRO_1000127975" description="Small ribosomal subunit protein uS19">
    <location>
        <begin position="1"/>
        <end position="92"/>
    </location>
</feature>
<sequence>MPRSLKKGPFIDLHLLKKVEKAVESGDKKPLRTWSRRSTIFPNMIGLTIAVHNGRQHVPVFVTDEMVGHKLGEFAPTRTYRGHAADKKAKKK</sequence>
<keyword id="KW-0687">Ribonucleoprotein</keyword>
<keyword id="KW-0689">Ribosomal protein</keyword>
<keyword id="KW-0694">RNA-binding</keyword>
<keyword id="KW-0699">rRNA-binding</keyword>
<evidence type="ECO:0000255" key="1">
    <source>
        <dbReference type="HAMAP-Rule" id="MF_00531"/>
    </source>
</evidence>
<evidence type="ECO:0000305" key="2"/>